<evidence type="ECO:0000250" key="1">
    <source>
        <dbReference type="UniProtKB" id="Q6PII3"/>
    </source>
</evidence>
<evidence type="ECO:0000255" key="2"/>
<evidence type="ECO:0000256" key="3">
    <source>
        <dbReference type="SAM" id="MobiDB-lite"/>
    </source>
</evidence>
<evidence type="ECO:0000305" key="4"/>
<organism>
    <name type="scientific">Mus musculus</name>
    <name type="common">Mouse</name>
    <dbReference type="NCBI Taxonomy" id="10090"/>
    <lineage>
        <taxon>Eukaryota</taxon>
        <taxon>Metazoa</taxon>
        <taxon>Chordata</taxon>
        <taxon>Craniata</taxon>
        <taxon>Vertebrata</taxon>
        <taxon>Euteleostomi</taxon>
        <taxon>Mammalia</taxon>
        <taxon>Eutheria</taxon>
        <taxon>Euarchontoglires</taxon>
        <taxon>Glires</taxon>
        <taxon>Rodentia</taxon>
        <taxon>Myomorpha</taxon>
        <taxon>Muroidea</taxon>
        <taxon>Muridae</taxon>
        <taxon>Murinae</taxon>
        <taxon>Mus</taxon>
        <taxon>Mus</taxon>
    </lineage>
</organism>
<accession>Q3U155</accession>
<accession>Q80XC8</accession>
<accession>Q8CA20</accession>
<feature type="chain" id="PRO_0000251957" description="Coiled-coil domain-containing protein 174">
    <location>
        <begin position="1"/>
        <end position="467"/>
    </location>
</feature>
<feature type="region of interest" description="Disordered" evidence="3">
    <location>
        <begin position="47"/>
        <end position="76"/>
    </location>
</feature>
<feature type="region of interest" description="Disordered" evidence="3">
    <location>
        <begin position="129"/>
        <end position="163"/>
    </location>
</feature>
<feature type="region of interest" description="Disordered" evidence="3">
    <location>
        <begin position="301"/>
        <end position="365"/>
    </location>
</feature>
<feature type="region of interest" description="Disordered" evidence="3">
    <location>
        <begin position="379"/>
        <end position="454"/>
    </location>
</feature>
<feature type="coiled-coil region" evidence="2">
    <location>
        <begin position="64"/>
        <end position="99"/>
    </location>
</feature>
<feature type="coiled-coil region" evidence="2">
    <location>
        <begin position="268"/>
        <end position="310"/>
    </location>
</feature>
<feature type="compositionally biased region" description="Basic and acidic residues" evidence="3">
    <location>
        <begin position="64"/>
        <end position="76"/>
    </location>
</feature>
<feature type="compositionally biased region" description="Acidic residues" evidence="3">
    <location>
        <begin position="136"/>
        <end position="147"/>
    </location>
</feature>
<feature type="compositionally biased region" description="Basic and acidic residues" evidence="3">
    <location>
        <begin position="349"/>
        <end position="365"/>
    </location>
</feature>
<feature type="compositionally biased region" description="Basic and acidic residues" evidence="3">
    <location>
        <begin position="379"/>
        <end position="390"/>
    </location>
</feature>
<feature type="compositionally biased region" description="Polar residues" evidence="3">
    <location>
        <begin position="406"/>
        <end position="415"/>
    </location>
</feature>
<feature type="compositionally biased region" description="Low complexity" evidence="3">
    <location>
        <begin position="423"/>
        <end position="446"/>
    </location>
</feature>
<feature type="modified residue" description="Phosphoserine" evidence="1">
    <location>
        <position position="198"/>
    </location>
</feature>
<feature type="sequence conflict" description="In Ref. 2; AAH51147." evidence="4" ref="2">
    <original>V</original>
    <variation>D</variation>
    <location>
        <position position="120"/>
    </location>
</feature>
<name>CC174_MOUSE</name>
<gene>
    <name type="primary">Ccdc174</name>
</gene>
<keyword id="KW-0175">Coiled coil</keyword>
<keyword id="KW-0539">Nucleus</keyword>
<keyword id="KW-0597">Phosphoprotein</keyword>
<keyword id="KW-1185">Reference proteome</keyword>
<reference key="1">
    <citation type="journal article" date="2005" name="Science">
        <title>The transcriptional landscape of the mammalian genome.</title>
        <authorList>
            <person name="Carninci P."/>
            <person name="Kasukawa T."/>
            <person name="Katayama S."/>
            <person name="Gough J."/>
            <person name="Frith M.C."/>
            <person name="Maeda N."/>
            <person name="Oyama R."/>
            <person name="Ravasi T."/>
            <person name="Lenhard B."/>
            <person name="Wells C."/>
            <person name="Kodzius R."/>
            <person name="Shimokawa K."/>
            <person name="Bajic V.B."/>
            <person name="Brenner S.E."/>
            <person name="Batalov S."/>
            <person name="Forrest A.R."/>
            <person name="Zavolan M."/>
            <person name="Davis M.J."/>
            <person name="Wilming L.G."/>
            <person name="Aidinis V."/>
            <person name="Allen J.E."/>
            <person name="Ambesi-Impiombato A."/>
            <person name="Apweiler R."/>
            <person name="Aturaliya R.N."/>
            <person name="Bailey T.L."/>
            <person name="Bansal M."/>
            <person name="Baxter L."/>
            <person name="Beisel K.W."/>
            <person name="Bersano T."/>
            <person name="Bono H."/>
            <person name="Chalk A.M."/>
            <person name="Chiu K.P."/>
            <person name="Choudhary V."/>
            <person name="Christoffels A."/>
            <person name="Clutterbuck D.R."/>
            <person name="Crowe M.L."/>
            <person name="Dalla E."/>
            <person name="Dalrymple B.P."/>
            <person name="de Bono B."/>
            <person name="Della Gatta G."/>
            <person name="di Bernardo D."/>
            <person name="Down T."/>
            <person name="Engstrom P."/>
            <person name="Fagiolini M."/>
            <person name="Faulkner G."/>
            <person name="Fletcher C.F."/>
            <person name="Fukushima T."/>
            <person name="Furuno M."/>
            <person name="Futaki S."/>
            <person name="Gariboldi M."/>
            <person name="Georgii-Hemming P."/>
            <person name="Gingeras T.R."/>
            <person name="Gojobori T."/>
            <person name="Green R.E."/>
            <person name="Gustincich S."/>
            <person name="Harbers M."/>
            <person name="Hayashi Y."/>
            <person name="Hensch T.K."/>
            <person name="Hirokawa N."/>
            <person name="Hill D."/>
            <person name="Huminiecki L."/>
            <person name="Iacono M."/>
            <person name="Ikeo K."/>
            <person name="Iwama A."/>
            <person name="Ishikawa T."/>
            <person name="Jakt M."/>
            <person name="Kanapin A."/>
            <person name="Katoh M."/>
            <person name="Kawasawa Y."/>
            <person name="Kelso J."/>
            <person name="Kitamura H."/>
            <person name="Kitano H."/>
            <person name="Kollias G."/>
            <person name="Krishnan S.P."/>
            <person name="Kruger A."/>
            <person name="Kummerfeld S.K."/>
            <person name="Kurochkin I.V."/>
            <person name="Lareau L.F."/>
            <person name="Lazarevic D."/>
            <person name="Lipovich L."/>
            <person name="Liu J."/>
            <person name="Liuni S."/>
            <person name="McWilliam S."/>
            <person name="Madan Babu M."/>
            <person name="Madera M."/>
            <person name="Marchionni L."/>
            <person name="Matsuda H."/>
            <person name="Matsuzawa S."/>
            <person name="Miki H."/>
            <person name="Mignone F."/>
            <person name="Miyake S."/>
            <person name="Morris K."/>
            <person name="Mottagui-Tabar S."/>
            <person name="Mulder N."/>
            <person name="Nakano N."/>
            <person name="Nakauchi H."/>
            <person name="Ng P."/>
            <person name="Nilsson R."/>
            <person name="Nishiguchi S."/>
            <person name="Nishikawa S."/>
            <person name="Nori F."/>
            <person name="Ohara O."/>
            <person name="Okazaki Y."/>
            <person name="Orlando V."/>
            <person name="Pang K.C."/>
            <person name="Pavan W.J."/>
            <person name="Pavesi G."/>
            <person name="Pesole G."/>
            <person name="Petrovsky N."/>
            <person name="Piazza S."/>
            <person name="Reed J."/>
            <person name="Reid J.F."/>
            <person name="Ring B.Z."/>
            <person name="Ringwald M."/>
            <person name="Rost B."/>
            <person name="Ruan Y."/>
            <person name="Salzberg S.L."/>
            <person name="Sandelin A."/>
            <person name="Schneider C."/>
            <person name="Schoenbach C."/>
            <person name="Sekiguchi K."/>
            <person name="Semple C.A."/>
            <person name="Seno S."/>
            <person name="Sessa L."/>
            <person name="Sheng Y."/>
            <person name="Shibata Y."/>
            <person name="Shimada H."/>
            <person name="Shimada K."/>
            <person name="Silva D."/>
            <person name="Sinclair B."/>
            <person name="Sperling S."/>
            <person name="Stupka E."/>
            <person name="Sugiura K."/>
            <person name="Sultana R."/>
            <person name="Takenaka Y."/>
            <person name="Taki K."/>
            <person name="Tammoja K."/>
            <person name="Tan S.L."/>
            <person name="Tang S."/>
            <person name="Taylor M.S."/>
            <person name="Tegner J."/>
            <person name="Teichmann S.A."/>
            <person name="Ueda H.R."/>
            <person name="van Nimwegen E."/>
            <person name="Verardo R."/>
            <person name="Wei C.L."/>
            <person name="Yagi K."/>
            <person name="Yamanishi H."/>
            <person name="Zabarovsky E."/>
            <person name="Zhu S."/>
            <person name="Zimmer A."/>
            <person name="Hide W."/>
            <person name="Bult C."/>
            <person name="Grimmond S.M."/>
            <person name="Teasdale R.D."/>
            <person name="Liu E.T."/>
            <person name="Brusic V."/>
            <person name="Quackenbush J."/>
            <person name="Wahlestedt C."/>
            <person name="Mattick J.S."/>
            <person name="Hume D.A."/>
            <person name="Kai C."/>
            <person name="Sasaki D."/>
            <person name="Tomaru Y."/>
            <person name="Fukuda S."/>
            <person name="Kanamori-Katayama M."/>
            <person name="Suzuki M."/>
            <person name="Aoki J."/>
            <person name="Arakawa T."/>
            <person name="Iida J."/>
            <person name="Imamura K."/>
            <person name="Itoh M."/>
            <person name="Kato T."/>
            <person name="Kawaji H."/>
            <person name="Kawagashira N."/>
            <person name="Kawashima T."/>
            <person name="Kojima M."/>
            <person name="Kondo S."/>
            <person name="Konno H."/>
            <person name="Nakano K."/>
            <person name="Ninomiya N."/>
            <person name="Nishio T."/>
            <person name="Okada M."/>
            <person name="Plessy C."/>
            <person name="Shibata K."/>
            <person name="Shiraki T."/>
            <person name="Suzuki S."/>
            <person name="Tagami M."/>
            <person name="Waki K."/>
            <person name="Watahiki A."/>
            <person name="Okamura-Oho Y."/>
            <person name="Suzuki H."/>
            <person name="Kawai J."/>
            <person name="Hayashizaki Y."/>
        </authorList>
    </citation>
    <scope>NUCLEOTIDE SEQUENCE [LARGE SCALE MRNA]</scope>
    <source>
        <strain>NOD</strain>
        <tissue>Spleen</tissue>
        <tissue>Thymus</tissue>
    </source>
</reference>
<reference key="2">
    <citation type="journal article" date="2004" name="Genome Res.">
        <title>The status, quality, and expansion of the NIH full-length cDNA project: the Mammalian Gene Collection (MGC).</title>
        <authorList>
            <consortium name="The MGC Project Team"/>
        </authorList>
    </citation>
    <scope>NUCLEOTIDE SEQUENCE [LARGE SCALE MRNA]</scope>
    <source>
        <tissue>Brain</tissue>
    </source>
</reference>
<dbReference type="EMBL" id="AK039818">
    <property type="protein sequence ID" value="BAC30460.1"/>
    <property type="molecule type" value="mRNA"/>
</dbReference>
<dbReference type="EMBL" id="AK156259">
    <property type="protein sequence ID" value="BAE33645.1"/>
    <property type="molecule type" value="mRNA"/>
</dbReference>
<dbReference type="EMBL" id="BC051147">
    <property type="protein sequence ID" value="AAH51147.1"/>
    <property type="molecule type" value="mRNA"/>
</dbReference>
<dbReference type="CCDS" id="CCDS20370.2"/>
<dbReference type="RefSeq" id="NP_766318.2">
    <property type="nucleotide sequence ID" value="NM_172730.2"/>
</dbReference>
<dbReference type="SMR" id="Q3U155"/>
<dbReference type="FunCoup" id="Q3U155">
    <property type="interactions" value="2731"/>
</dbReference>
<dbReference type="STRING" id="10090.ENSMUSP00000049280"/>
<dbReference type="iPTMnet" id="Q3U155"/>
<dbReference type="PhosphoSitePlus" id="Q3U155"/>
<dbReference type="PaxDb" id="10090-ENSMUSP00000049280"/>
<dbReference type="PeptideAtlas" id="Q3U155"/>
<dbReference type="ProteomicsDB" id="265584"/>
<dbReference type="Pumba" id="Q3U155"/>
<dbReference type="DNASU" id="232236"/>
<dbReference type="GeneID" id="232236"/>
<dbReference type="KEGG" id="mmu:232236"/>
<dbReference type="UCSC" id="uc009cyk.1">
    <property type="organism name" value="mouse"/>
</dbReference>
<dbReference type="AGR" id="MGI:2444652"/>
<dbReference type="CTD" id="51244"/>
<dbReference type="MGI" id="MGI:2444652">
    <property type="gene designation" value="Ccdc174"/>
</dbReference>
<dbReference type="eggNOG" id="ENOG502QWJ9">
    <property type="taxonomic scope" value="Eukaryota"/>
</dbReference>
<dbReference type="InParanoid" id="Q3U155"/>
<dbReference type="OrthoDB" id="333551at2759"/>
<dbReference type="TreeFam" id="TF323679"/>
<dbReference type="BioGRID-ORCS" id="232236">
    <property type="hits" value="20 hits in 77 CRISPR screens"/>
</dbReference>
<dbReference type="PRO" id="PR:Q3U155"/>
<dbReference type="Proteomes" id="UP000000589">
    <property type="component" value="Unplaced"/>
</dbReference>
<dbReference type="RNAct" id="Q3U155">
    <property type="molecule type" value="protein"/>
</dbReference>
<dbReference type="GO" id="GO:0005634">
    <property type="term" value="C:nucleus"/>
    <property type="evidence" value="ECO:0000250"/>
    <property type="project" value="UniProtKB"/>
</dbReference>
<dbReference type="InterPro" id="IPR025066">
    <property type="entry name" value="CCDC174-like"/>
</dbReference>
<dbReference type="PANTHER" id="PTHR15885">
    <property type="entry name" value="COILED-COIL DOMAIN-CONTAINING PROTEIN 174"/>
    <property type="match status" value="1"/>
</dbReference>
<dbReference type="PANTHER" id="PTHR15885:SF1">
    <property type="entry name" value="COILED-COIL DOMAIN-CONTAINING PROTEIN 174"/>
    <property type="match status" value="1"/>
</dbReference>
<dbReference type="Pfam" id="PF25449">
    <property type="entry name" value="CCDC174_GRSR"/>
    <property type="match status" value="1"/>
</dbReference>
<dbReference type="Pfam" id="PF13300">
    <property type="entry name" value="DUF4078"/>
    <property type="match status" value="1"/>
</dbReference>
<comment type="function">
    <text evidence="1">Probably involved in neuronal development.</text>
</comment>
<comment type="subcellular location">
    <subcellularLocation>
        <location evidence="1">Nucleus</location>
    </subcellularLocation>
</comment>
<sequence length="467" mass="53942">MDRKKKPLDVTASSLVDLKAELFRKQEEFKQEKLLKDSGVFGKPKTINKKPSIWSKQNAGVTSRAEKDAEQKLEEQKTLDKAREKLEEKAKLYEKMTKGDFLDEEVEDMYLVDFTQKIIVKRKEMEVLGATRESQIEEERDDDDKEEFSDKDIPPPQDPSEEWVDYVDSLGRSRRCMRKDLPSLLEMDKNLQGRLFVSPANEKTLLSEDMRKELQRQQWEEEEREALKKPMGPIHYEDIRENEARQLGVGYFAFARDKELRNKQMKTLEMLREQTTDQRIKRENIKEKRKAMLEARLAKLRQKKMKKSKEDGTEEEGREADGVVPEPSEPKPVPAPAPVAQNSKVEVIIQERRDTKPGVPHIREWDRGKDFSFGFWSKKQSELRAERDPEFAPPSNYFVGQKRTAPMSSQPQSRPGSAPSDLGHSSGQSQEPSSSHTSTPASESSPQAPTVTFQTLDDMISYYKQVT</sequence>
<proteinExistence type="evidence at transcript level"/>
<protein>
    <recommendedName>
        <fullName>Coiled-coil domain-containing protein 174</fullName>
    </recommendedName>
</protein>